<comment type="function">
    <text>Inactivates ribosomes by hydrolyzing 16S RNA in 30S ribosomes at a specific site.</text>
</comment>
<comment type="function">
    <text>Colicins are polypeptide toxins produced by and active against E.coli and closely related bacteria.</text>
</comment>
<comment type="miscellaneous">
    <text>Plasmid Clo DF13 originates from E.cloacae but is stably maintained in and studied mostly from E.coli.</text>
</comment>
<comment type="similarity">
    <text evidence="2">Belongs to the cloacin colicin family.</text>
</comment>
<accession>P00645</accession>
<reference key="1">
    <citation type="journal article" date="1986" name="Plasmid">
        <title>The complete nucleotide sequence of the bacteriocinogenic plasmid CloDF13.</title>
        <authorList>
            <person name="Nijkamp H.J.J."/>
            <person name="de Lang R."/>
            <person name="Stuitje A.R."/>
            <person name="van den Elsen P.J.M."/>
            <person name="Veltkamp E."/>
            <person name="van Putten A.J."/>
        </authorList>
    </citation>
    <scope>NUCLEOTIDE SEQUENCE [GENOMIC DNA]</scope>
</reference>
<reference key="2">
    <citation type="journal article" date="1983" name="Nucleic Acids Res.">
        <title>Molecular structure and function of the bacteriocin gene and bacteriocin protein of plasmid Clo DF13.</title>
        <authorList>
            <person name="van den Elzen P.J.M."/>
            <person name="Walters H.H.B."/>
            <person name="Veltkamp E."/>
            <person name="Nijkamp H.J.J."/>
        </authorList>
    </citation>
    <scope>NUCLEOTIDE SEQUENCE [GENOMIC DNA]</scope>
</reference>
<protein>
    <recommendedName>
        <fullName>Cloacin</fullName>
        <ecNumber>3.1.-.-</ecNumber>
    </recommendedName>
    <alternativeName>
        <fullName>Ribonuclease</fullName>
    </alternativeName>
</protein>
<dbReference type="EC" id="3.1.-.-"/>
<dbReference type="EMBL" id="X04466">
    <property type="protein sequence ID" value="CAA28147.1"/>
    <property type="molecule type" value="Genomic_DNA"/>
</dbReference>
<dbReference type="PIR" id="A00791">
    <property type="entry name" value="CDECP3"/>
</dbReference>
<dbReference type="RefSeq" id="NP_052372.1">
    <property type="nucleotide sequence ID" value="NC_002119.1"/>
</dbReference>
<dbReference type="RefSeq" id="WP_010891190.1">
    <property type="nucleotide sequence ID" value="NC_002119.1"/>
</dbReference>
<dbReference type="SMR" id="P00645"/>
<dbReference type="GO" id="GO:0005727">
    <property type="term" value="C:extrachromosomal circular DNA"/>
    <property type="evidence" value="ECO:0007669"/>
    <property type="project" value="InterPro"/>
</dbReference>
<dbReference type="GO" id="GO:0004519">
    <property type="term" value="F:endonuclease activity"/>
    <property type="evidence" value="ECO:0007669"/>
    <property type="project" value="UniProtKB-KW"/>
</dbReference>
<dbReference type="GO" id="GO:0043022">
    <property type="term" value="F:ribosome binding"/>
    <property type="evidence" value="ECO:0007669"/>
    <property type="project" value="InterPro"/>
</dbReference>
<dbReference type="GO" id="GO:0003723">
    <property type="term" value="F:RNA binding"/>
    <property type="evidence" value="ECO:0007669"/>
    <property type="project" value="InterPro"/>
</dbReference>
<dbReference type="GO" id="GO:0042742">
    <property type="term" value="P:defense response to bacterium"/>
    <property type="evidence" value="ECO:0007669"/>
    <property type="project" value="UniProtKB-KW"/>
</dbReference>
<dbReference type="GO" id="GO:0031640">
    <property type="term" value="P:killing of cells of another organism"/>
    <property type="evidence" value="ECO:0007669"/>
    <property type="project" value="UniProtKB-KW"/>
</dbReference>
<dbReference type="Gene3D" id="3.10.380.10">
    <property type="entry name" value="Colicin E3-like ribonuclease domain"/>
    <property type="match status" value="1"/>
</dbReference>
<dbReference type="Gene3D" id="1.10.287.620">
    <property type="entry name" value="Helix Hairpins"/>
    <property type="match status" value="1"/>
</dbReference>
<dbReference type="Gene3D" id="1.20.5.740">
    <property type="entry name" value="Single helix bin"/>
    <property type="match status" value="1"/>
</dbReference>
<dbReference type="InterPro" id="IPR024575">
    <property type="entry name" value="Cloacin_colicin"/>
</dbReference>
<dbReference type="InterPro" id="IPR036725">
    <property type="entry name" value="ColE3_ribonuclease_sf"/>
</dbReference>
<dbReference type="InterPro" id="IPR009105">
    <property type="entry name" value="Colicin_E3_ribonuclease"/>
</dbReference>
<dbReference type="InterPro" id="IPR024566">
    <property type="entry name" value="Colicin_R_dom"/>
</dbReference>
<dbReference type="InterPro" id="IPR016128">
    <property type="entry name" value="Pyosin/cloacin_T_dom"/>
</dbReference>
<dbReference type="InterPro" id="IPR036302">
    <property type="entry name" value="Pyosin/cloacin_T_dom_sf"/>
</dbReference>
<dbReference type="Pfam" id="PF03515">
    <property type="entry name" value="Cloacin"/>
    <property type="match status" value="1"/>
</dbReference>
<dbReference type="Pfam" id="PF09000">
    <property type="entry name" value="Cytotoxic"/>
    <property type="match status" value="1"/>
</dbReference>
<dbReference type="Pfam" id="PF11570">
    <property type="entry name" value="E2R135"/>
    <property type="match status" value="1"/>
</dbReference>
<dbReference type="PRINTS" id="PR01295">
    <property type="entry name" value="CLOACIN"/>
</dbReference>
<dbReference type="SUPFAM" id="SSF69369">
    <property type="entry name" value="Cloacin translocation domain"/>
    <property type="match status" value="1"/>
</dbReference>
<dbReference type="SUPFAM" id="SSF69985">
    <property type="entry name" value="Colicin E3 receptor domain"/>
    <property type="match status" value="1"/>
</dbReference>
<dbReference type="SUPFAM" id="SSF63840">
    <property type="entry name" value="Ribonuclease domain of colicin E3"/>
    <property type="match status" value="1"/>
</dbReference>
<organism>
    <name type="scientific">Escherichia coli</name>
    <dbReference type="NCBI Taxonomy" id="562"/>
    <lineage>
        <taxon>Bacteria</taxon>
        <taxon>Pseudomonadati</taxon>
        <taxon>Pseudomonadota</taxon>
        <taxon>Gammaproteobacteria</taxon>
        <taxon>Enterobacterales</taxon>
        <taxon>Enterobacteriaceae</taxon>
        <taxon>Escherichia</taxon>
    </lineage>
</organism>
<evidence type="ECO:0000256" key="1">
    <source>
        <dbReference type="SAM" id="MobiDB-lite"/>
    </source>
</evidence>
<evidence type="ECO:0000305" key="2"/>
<sequence>MSGGDGRGPGNSGLGHNGGQASGNVNGTSGKGGPSSGGGTDPNSGPGWGTTHTPNGDIHNYNPGEFGNGGSKPGGNGGNSGNHSGSSGGGQSSATAMAFGLPALATPGAEGPALSFSGDALSSAVADVLAALKGPFKFGLWGIAIYGVLPSEIAKDDPKMMSKIMTSLPADTVTETPASTLPLDQATVRVRQRVVDVVKDERQHIAVVAGRPMSVPVVDAKPTKRPGVFSVSIPGLPALQVSVPKGVPAAKAPPKGIVAEKGDSRPAGFTAGGNSREAVIRFPKETGQKPVYVSVTDVLTPAQVKQRQEEEKRRQQAWDAAHPEEGLKREYDKAKAELDAEDKNITTLNGRITSTEKAIPGARAAVQEADKKVKEAEANKDDFVTYNPPHEYGSGWQDQVRYLDKDIQNQNAKLKAAQASLNAMNDALSRDKAALSGAMESRKQKEKKAKEAENKLNEEKKKPRKGTKDYGHDYFPDPKTEDIKGLGELKEGKPKTPKQGGGGKRARWYGDKKRKIYEWDSQHGELEGYRASDGEHLGAFDPKTGKQVKGPDPKRNIKKYL</sequence>
<gene>
    <name type="primary">ccl</name>
</gene>
<name>CEAC_ECOLX</name>
<proteinExistence type="inferred from homology"/>
<feature type="chain" id="PRO_0000218679" description="Cloacin">
    <location>
        <begin position="1"/>
        <end position="561"/>
    </location>
</feature>
<feature type="region of interest" description="Involved in the translocation of the protein across the cell membrane" evidence="2">
    <location>
        <begin position="1"/>
        <end position="180"/>
    </location>
</feature>
<feature type="region of interest" description="Disordered" evidence="1">
    <location>
        <begin position="1"/>
        <end position="93"/>
    </location>
</feature>
<feature type="region of interest" description="Responsible for the receptor binding activity">
    <location>
        <begin position="200"/>
        <end position="420"/>
    </location>
</feature>
<feature type="region of interest" description="Disordered" evidence="1">
    <location>
        <begin position="254"/>
        <end position="273"/>
    </location>
</feature>
<feature type="region of interest" description="Disordered" evidence="1">
    <location>
        <begin position="304"/>
        <end position="326"/>
    </location>
</feature>
<feature type="region of interest" description="Ribonuclease activity">
    <location>
        <begin position="421"/>
        <end position="561"/>
    </location>
</feature>
<feature type="region of interest" description="Disordered" evidence="1">
    <location>
        <begin position="432"/>
        <end position="507"/>
    </location>
</feature>
<feature type="region of interest" description="Disordered" evidence="1">
    <location>
        <begin position="530"/>
        <end position="561"/>
    </location>
</feature>
<feature type="region of interest" description="Binding of immunity protein">
    <location>
        <begin position="540"/>
        <end position="561"/>
    </location>
</feature>
<feature type="compositionally biased region" description="Gly residues" evidence="1">
    <location>
        <begin position="1"/>
        <end position="21"/>
    </location>
</feature>
<feature type="compositionally biased region" description="Gly residues" evidence="1">
    <location>
        <begin position="29"/>
        <end position="40"/>
    </location>
</feature>
<feature type="compositionally biased region" description="Gly residues" evidence="1">
    <location>
        <begin position="66"/>
        <end position="91"/>
    </location>
</feature>
<feature type="compositionally biased region" description="Basic and acidic residues" evidence="1">
    <location>
        <begin position="306"/>
        <end position="326"/>
    </location>
</feature>
<feature type="compositionally biased region" description="Basic and acidic residues" evidence="1">
    <location>
        <begin position="440"/>
        <end position="494"/>
    </location>
</feature>
<feature type="sequence conflict" description="In Ref. 2." evidence="2" ref="2">
    <original>P</original>
    <variation>L</variation>
    <location>
        <position position="112"/>
    </location>
</feature>
<geneLocation type="plasmid">
    <name>Clo DF13</name>
</geneLocation>
<keyword id="KW-0044">Antibiotic</keyword>
<keyword id="KW-0929">Antimicrobial</keyword>
<keyword id="KW-0078">Bacteriocin</keyword>
<keyword id="KW-0255">Endonuclease</keyword>
<keyword id="KW-0378">Hydrolase</keyword>
<keyword id="KW-0540">Nuclease</keyword>
<keyword id="KW-0614">Plasmid</keyword>